<keyword id="KW-0450">Lipoyl</keyword>
<keyword id="KW-1185">Reference proteome</keyword>
<evidence type="ECO:0000255" key="1">
    <source>
        <dbReference type="HAMAP-Rule" id="MF_00272"/>
    </source>
</evidence>
<evidence type="ECO:0000255" key="2">
    <source>
        <dbReference type="PROSITE-ProRule" id="PRU01066"/>
    </source>
</evidence>
<protein>
    <recommendedName>
        <fullName evidence="1">Glycine cleavage system H protein</fullName>
    </recommendedName>
</protein>
<feature type="chain" id="PRO_0000166231" description="Glycine cleavage system H protein">
    <location>
        <begin position="1"/>
        <end position="129"/>
    </location>
</feature>
<feature type="domain" description="Lipoyl-binding" evidence="2">
    <location>
        <begin position="23"/>
        <end position="104"/>
    </location>
</feature>
<feature type="modified residue" description="N6-lipoyllysine" evidence="1">
    <location>
        <position position="64"/>
    </location>
</feature>
<reference key="1">
    <citation type="journal article" date="2003" name="J. Bacteriol.">
        <title>Complete genome sequence of the ammonia-oxidizing bacterium and obligate chemolithoautotroph Nitrosomonas europaea.</title>
        <authorList>
            <person name="Chain P."/>
            <person name="Lamerdin J.E."/>
            <person name="Larimer F.W."/>
            <person name="Regala W."/>
            <person name="Lao V."/>
            <person name="Land M.L."/>
            <person name="Hauser L."/>
            <person name="Hooper A.B."/>
            <person name="Klotz M.G."/>
            <person name="Norton J."/>
            <person name="Sayavedra-Soto L.A."/>
            <person name="Arciero D.M."/>
            <person name="Hommes N.G."/>
            <person name="Whittaker M.M."/>
            <person name="Arp D.J."/>
        </authorList>
    </citation>
    <scope>NUCLEOTIDE SEQUENCE [LARGE SCALE GENOMIC DNA]</scope>
    <source>
        <strain>ATCC 19718 / CIP 103999 / KCTC 2705 / NBRC 14298</strain>
    </source>
</reference>
<name>GCSH_NITEU</name>
<accession>Q82WQ5</accession>
<dbReference type="EMBL" id="AL954747">
    <property type="protein sequence ID" value="CAD84519.1"/>
    <property type="molecule type" value="Genomic_DNA"/>
</dbReference>
<dbReference type="RefSeq" id="WP_011111234.1">
    <property type="nucleotide sequence ID" value="NC_004757.1"/>
</dbReference>
<dbReference type="SMR" id="Q82WQ5"/>
<dbReference type="STRING" id="228410.NE0608"/>
<dbReference type="GeneID" id="87103807"/>
<dbReference type="KEGG" id="neu:NE0608"/>
<dbReference type="eggNOG" id="COG0509">
    <property type="taxonomic scope" value="Bacteria"/>
</dbReference>
<dbReference type="HOGENOM" id="CLU_097408_2_1_4"/>
<dbReference type="OrthoDB" id="9796712at2"/>
<dbReference type="PhylomeDB" id="Q82WQ5"/>
<dbReference type="Proteomes" id="UP000001416">
    <property type="component" value="Chromosome"/>
</dbReference>
<dbReference type="GO" id="GO:0005829">
    <property type="term" value="C:cytosol"/>
    <property type="evidence" value="ECO:0007669"/>
    <property type="project" value="TreeGrafter"/>
</dbReference>
<dbReference type="GO" id="GO:0005960">
    <property type="term" value="C:glycine cleavage complex"/>
    <property type="evidence" value="ECO:0007669"/>
    <property type="project" value="InterPro"/>
</dbReference>
<dbReference type="GO" id="GO:0019464">
    <property type="term" value="P:glycine decarboxylation via glycine cleavage system"/>
    <property type="evidence" value="ECO:0007669"/>
    <property type="project" value="UniProtKB-UniRule"/>
</dbReference>
<dbReference type="CDD" id="cd06848">
    <property type="entry name" value="GCS_H"/>
    <property type="match status" value="1"/>
</dbReference>
<dbReference type="Gene3D" id="2.40.50.100">
    <property type="match status" value="1"/>
</dbReference>
<dbReference type="HAMAP" id="MF_00272">
    <property type="entry name" value="GcvH"/>
    <property type="match status" value="1"/>
</dbReference>
<dbReference type="InterPro" id="IPR003016">
    <property type="entry name" value="2-oxoA_DH_lipoyl-BS"/>
</dbReference>
<dbReference type="InterPro" id="IPR000089">
    <property type="entry name" value="Biotin_lipoyl"/>
</dbReference>
<dbReference type="InterPro" id="IPR002930">
    <property type="entry name" value="GCV_H"/>
</dbReference>
<dbReference type="InterPro" id="IPR033753">
    <property type="entry name" value="GCV_H/Fam206"/>
</dbReference>
<dbReference type="InterPro" id="IPR017453">
    <property type="entry name" value="GCV_H_sub"/>
</dbReference>
<dbReference type="InterPro" id="IPR011053">
    <property type="entry name" value="Single_hybrid_motif"/>
</dbReference>
<dbReference type="NCBIfam" id="TIGR00527">
    <property type="entry name" value="gcvH"/>
    <property type="match status" value="1"/>
</dbReference>
<dbReference type="NCBIfam" id="NF002270">
    <property type="entry name" value="PRK01202.1"/>
    <property type="match status" value="1"/>
</dbReference>
<dbReference type="PANTHER" id="PTHR11715">
    <property type="entry name" value="GLYCINE CLEAVAGE SYSTEM H PROTEIN"/>
    <property type="match status" value="1"/>
</dbReference>
<dbReference type="PANTHER" id="PTHR11715:SF3">
    <property type="entry name" value="GLYCINE CLEAVAGE SYSTEM H PROTEIN-RELATED"/>
    <property type="match status" value="1"/>
</dbReference>
<dbReference type="Pfam" id="PF01597">
    <property type="entry name" value="GCV_H"/>
    <property type="match status" value="1"/>
</dbReference>
<dbReference type="SUPFAM" id="SSF51230">
    <property type="entry name" value="Single hybrid motif"/>
    <property type="match status" value="1"/>
</dbReference>
<dbReference type="PROSITE" id="PS50968">
    <property type="entry name" value="BIOTINYL_LIPOYL"/>
    <property type="match status" value="1"/>
</dbReference>
<dbReference type="PROSITE" id="PS00189">
    <property type="entry name" value="LIPOYL"/>
    <property type="match status" value="1"/>
</dbReference>
<comment type="function">
    <text evidence="1">The glycine cleavage system catalyzes the degradation of glycine. The H protein shuttles the methylamine group of glycine from the P protein to the T protein.</text>
</comment>
<comment type="cofactor">
    <cofactor evidence="1">
        <name>(R)-lipoate</name>
        <dbReference type="ChEBI" id="CHEBI:83088"/>
    </cofactor>
    <text evidence="1">Binds 1 lipoyl cofactor covalently.</text>
</comment>
<comment type="subunit">
    <text evidence="1">The glycine cleavage system is composed of four proteins: P, T, L and H.</text>
</comment>
<comment type="similarity">
    <text evidence="1">Belongs to the GcvH family.</text>
</comment>
<sequence length="129" mass="13888">MSVPAELKYTESHEWVRLEADGSVTVGITQHAQELLGDMVFVQLPDVGRALAQREDCAVVESVKAASDIYAPLGGEVIAVNSEVETSPEKINEDCYAAWLFKLKPANAGEVDGLLDAGGYQKLLDSEAH</sequence>
<proteinExistence type="inferred from homology"/>
<organism>
    <name type="scientific">Nitrosomonas europaea (strain ATCC 19718 / CIP 103999 / KCTC 2705 / NBRC 14298)</name>
    <dbReference type="NCBI Taxonomy" id="228410"/>
    <lineage>
        <taxon>Bacteria</taxon>
        <taxon>Pseudomonadati</taxon>
        <taxon>Pseudomonadota</taxon>
        <taxon>Betaproteobacteria</taxon>
        <taxon>Nitrosomonadales</taxon>
        <taxon>Nitrosomonadaceae</taxon>
        <taxon>Nitrosomonas</taxon>
    </lineage>
</organism>
<gene>
    <name evidence="1" type="primary">gcvH</name>
    <name type="synonym">gcvH1</name>
    <name type="ordered locus">NE0608</name>
</gene>